<sequence length="180" mass="19921">MTTALLVIDIQNDYFPNGKMALTNPEKAAQNAAKLLSHFRNTGAPVFHVQHITEGNIAHFFHPNTEGVEIHESVRPLEKETVIVKHMPNSFFNTDLNGKLQEEGVKELVVCGMMSHMCIDATVRSAVEHGYVCQVVEDACATTTLQIEDKIVPAEHVHYAFMAALNGVYATVKTTEAFLK</sequence>
<comment type="similarity">
    <text evidence="1">Belongs to the isochorismatase family.</text>
</comment>
<organism>
    <name type="scientific">Bacillus subtilis (strain 168)</name>
    <dbReference type="NCBI Taxonomy" id="224308"/>
    <lineage>
        <taxon>Bacteria</taxon>
        <taxon>Bacillati</taxon>
        <taxon>Bacillota</taxon>
        <taxon>Bacilli</taxon>
        <taxon>Bacillales</taxon>
        <taxon>Bacillaceae</taxon>
        <taxon>Bacillus</taxon>
    </lineage>
</organism>
<feature type="chain" id="PRO_0000388361" description="Uncharacterized isochorismatase family protein YddQ">
    <location>
        <begin position="1"/>
        <end position="180"/>
    </location>
</feature>
<accession>P96654</accession>
<accession>Q797J3</accession>
<keyword id="KW-0378">Hydrolase</keyword>
<keyword id="KW-1185">Reference proteome</keyword>
<reference key="1">
    <citation type="submission" date="1997-03" db="EMBL/GenBank/DDBJ databases">
        <title>A 148 kbp sequence of the region between 35 and 47 degree of the Bacillus subtilis genome.</title>
        <authorList>
            <person name="Kasahara Y."/>
            <person name="Nakai S."/>
            <person name="Lee S."/>
            <person name="Sadaie Y."/>
            <person name="Ogasawara N."/>
        </authorList>
    </citation>
    <scope>NUCLEOTIDE SEQUENCE [GENOMIC DNA]</scope>
    <source>
        <strain>168</strain>
    </source>
</reference>
<reference key="2">
    <citation type="journal article" date="1997" name="Nature">
        <title>The complete genome sequence of the Gram-positive bacterium Bacillus subtilis.</title>
        <authorList>
            <person name="Kunst F."/>
            <person name="Ogasawara N."/>
            <person name="Moszer I."/>
            <person name="Albertini A.M."/>
            <person name="Alloni G."/>
            <person name="Azevedo V."/>
            <person name="Bertero M.G."/>
            <person name="Bessieres P."/>
            <person name="Bolotin A."/>
            <person name="Borchert S."/>
            <person name="Borriss R."/>
            <person name="Boursier L."/>
            <person name="Brans A."/>
            <person name="Braun M."/>
            <person name="Brignell S.C."/>
            <person name="Bron S."/>
            <person name="Brouillet S."/>
            <person name="Bruschi C.V."/>
            <person name="Caldwell B."/>
            <person name="Capuano V."/>
            <person name="Carter N.M."/>
            <person name="Choi S.-K."/>
            <person name="Codani J.-J."/>
            <person name="Connerton I.F."/>
            <person name="Cummings N.J."/>
            <person name="Daniel R.A."/>
            <person name="Denizot F."/>
            <person name="Devine K.M."/>
            <person name="Duesterhoeft A."/>
            <person name="Ehrlich S.D."/>
            <person name="Emmerson P.T."/>
            <person name="Entian K.-D."/>
            <person name="Errington J."/>
            <person name="Fabret C."/>
            <person name="Ferrari E."/>
            <person name="Foulger D."/>
            <person name="Fritz C."/>
            <person name="Fujita M."/>
            <person name="Fujita Y."/>
            <person name="Fuma S."/>
            <person name="Galizzi A."/>
            <person name="Galleron N."/>
            <person name="Ghim S.-Y."/>
            <person name="Glaser P."/>
            <person name="Goffeau A."/>
            <person name="Golightly E.J."/>
            <person name="Grandi G."/>
            <person name="Guiseppi G."/>
            <person name="Guy B.J."/>
            <person name="Haga K."/>
            <person name="Haiech J."/>
            <person name="Harwood C.R."/>
            <person name="Henaut A."/>
            <person name="Hilbert H."/>
            <person name="Holsappel S."/>
            <person name="Hosono S."/>
            <person name="Hullo M.-F."/>
            <person name="Itaya M."/>
            <person name="Jones L.-M."/>
            <person name="Joris B."/>
            <person name="Karamata D."/>
            <person name="Kasahara Y."/>
            <person name="Klaerr-Blanchard M."/>
            <person name="Klein C."/>
            <person name="Kobayashi Y."/>
            <person name="Koetter P."/>
            <person name="Koningstein G."/>
            <person name="Krogh S."/>
            <person name="Kumano M."/>
            <person name="Kurita K."/>
            <person name="Lapidus A."/>
            <person name="Lardinois S."/>
            <person name="Lauber J."/>
            <person name="Lazarevic V."/>
            <person name="Lee S.-M."/>
            <person name="Levine A."/>
            <person name="Liu H."/>
            <person name="Masuda S."/>
            <person name="Mauel C."/>
            <person name="Medigue C."/>
            <person name="Medina N."/>
            <person name="Mellado R.P."/>
            <person name="Mizuno M."/>
            <person name="Moestl D."/>
            <person name="Nakai S."/>
            <person name="Noback M."/>
            <person name="Noone D."/>
            <person name="O'Reilly M."/>
            <person name="Ogawa K."/>
            <person name="Ogiwara A."/>
            <person name="Oudega B."/>
            <person name="Park S.-H."/>
            <person name="Parro V."/>
            <person name="Pohl T.M."/>
            <person name="Portetelle D."/>
            <person name="Porwollik S."/>
            <person name="Prescott A.M."/>
            <person name="Presecan E."/>
            <person name="Pujic P."/>
            <person name="Purnelle B."/>
            <person name="Rapoport G."/>
            <person name="Rey M."/>
            <person name="Reynolds S."/>
            <person name="Rieger M."/>
            <person name="Rivolta C."/>
            <person name="Rocha E."/>
            <person name="Roche B."/>
            <person name="Rose M."/>
            <person name="Sadaie Y."/>
            <person name="Sato T."/>
            <person name="Scanlan E."/>
            <person name="Schleich S."/>
            <person name="Schroeter R."/>
            <person name="Scoffone F."/>
            <person name="Sekiguchi J."/>
            <person name="Sekowska A."/>
            <person name="Seror S.J."/>
            <person name="Serror P."/>
            <person name="Shin B.-S."/>
            <person name="Soldo B."/>
            <person name="Sorokin A."/>
            <person name="Tacconi E."/>
            <person name="Takagi T."/>
            <person name="Takahashi H."/>
            <person name="Takemaru K."/>
            <person name="Takeuchi M."/>
            <person name="Tamakoshi A."/>
            <person name="Tanaka T."/>
            <person name="Terpstra P."/>
            <person name="Tognoni A."/>
            <person name="Tosato V."/>
            <person name="Uchiyama S."/>
            <person name="Vandenbol M."/>
            <person name="Vannier F."/>
            <person name="Vassarotti A."/>
            <person name="Viari A."/>
            <person name="Wambutt R."/>
            <person name="Wedler E."/>
            <person name="Wedler H."/>
            <person name="Weitzenegger T."/>
            <person name="Winters P."/>
            <person name="Wipat A."/>
            <person name="Yamamoto H."/>
            <person name="Yamane K."/>
            <person name="Yasumoto K."/>
            <person name="Yata K."/>
            <person name="Yoshida K."/>
            <person name="Yoshikawa H.-F."/>
            <person name="Zumstein E."/>
            <person name="Yoshikawa H."/>
            <person name="Danchin A."/>
        </authorList>
    </citation>
    <scope>NUCLEOTIDE SEQUENCE [LARGE SCALE GENOMIC DNA]</scope>
    <source>
        <strain>168</strain>
    </source>
</reference>
<name>YDDQ_BACSU</name>
<gene>
    <name type="primary">yddQ</name>
    <name type="ordered locus">BSU05070</name>
</gene>
<dbReference type="EC" id="3.-.-.-"/>
<dbReference type="EMBL" id="AB001488">
    <property type="protein sequence ID" value="BAA19343.1"/>
    <property type="molecule type" value="Genomic_DNA"/>
</dbReference>
<dbReference type="EMBL" id="AL009126">
    <property type="protein sequence ID" value="CAB12314.1"/>
    <property type="molecule type" value="Genomic_DNA"/>
</dbReference>
<dbReference type="PIR" id="G69776">
    <property type="entry name" value="G69776"/>
</dbReference>
<dbReference type="RefSeq" id="NP_388388.1">
    <property type="nucleotide sequence ID" value="NC_000964.3"/>
</dbReference>
<dbReference type="RefSeq" id="WP_003234256.1">
    <property type="nucleotide sequence ID" value="NZ_OZ025638.1"/>
</dbReference>
<dbReference type="SMR" id="P96654"/>
<dbReference type="FunCoup" id="P96654">
    <property type="interactions" value="298"/>
</dbReference>
<dbReference type="STRING" id="224308.BSU05070"/>
<dbReference type="PaxDb" id="224308-BSU05070"/>
<dbReference type="EnsemblBacteria" id="CAB12314">
    <property type="protein sequence ID" value="CAB12314"/>
    <property type="gene ID" value="BSU_05070"/>
</dbReference>
<dbReference type="GeneID" id="938129"/>
<dbReference type="KEGG" id="bsu:BSU05070"/>
<dbReference type="PATRIC" id="fig|224308.179.peg.538"/>
<dbReference type="eggNOG" id="COG1335">
    <property type="taxonomic scope" value="Bacteria"/>
</dbReference>
<dbReference type="InParanoid" id="P96654"/>
<dbReference type="OrthoDB" id="257098at2"/>
<dbReference type="PhylomeDB" id="P96654"/>
<dbReference type="BioCyc" id="BSUB:BSU05070-MONOMER"/>
<dbReference type="Proteomes" id="UP000001570">
    <property type="component" value="Chromosome"/>
</dbReference>
<dbReference type="GO" id="GO:0016787">
    <property type="term" value="F:hydrolase activity"/>
    <property type="evidence" value="ECO:0007669"/>
    <property type="project" value="UniProtKB-KW"/>
</dbReference>
<dbReference type="CDD" id="cd01014">
    <property type="entry name" value="nicotinamidase_related"/>
    <property type="match status" value="1"/>
</dbReference>
<dbReference type="Gene3D" id="3.40.50.850">
    <property type="entry name" value="Isochorismatase-like"/>
    <property type="match status" value="1"/>
</dbReference>
<dbReference type="InterPro" id="IPR000868">
    <property type="entry name" value="Isochorismatase-like_dom"/>
</dbReference>
<dbReference type="InterPro" id="IPR050272">
    <property type="entry name" value="Isochorismatase-like_hydrls"/>
</dbReference>
<dbReference type="InterPro" id="IPR036380">
    <property type="entry name" value="Isochorismatase-like_sf"/>
</dbReference>
<dbReference type="PANTHER" id="PTHR43540:SF1">
    <property type="entry name" value="ISOCHORISMATASE HYDROLASE"/>
    <property type="match status" value="1"/>
</dbReference>
<dbReference type="PANTHER" id="PTHR43540">
    <property type="entry name" value="PEROXYUREIDOACRYLATE/UREIDOACRYLATE AMIDOHYDROLASE-RELATED"/>
    <property type="match status" value="1"/>
</dbReference>
<dbReference type="Pfam" id="PF00857">
    <property type="entry name" value="Isochorismatase"/>
    <property type="match status" value="1"/>
</dbReference>
<dbReference type="SUPFAM" id="SSF52499">
    <property type="entry name" value="Isochorismatase-like hydrolases"/>
    <property type="match status" value="1"/>
</dbReference>
<protein>
    <recommendedName>
        <fullName>Uncharacterized isochorismatase family protein YddQ</fullName>
        <ecNumber>3.-.-.-</ecNumber>
    </recommendedName>
</protein>
<proteinExistence type="inferred from homology"/>
<evidence type="ECO:0000305" key="1"/>